<comment type="function">
    <text evidence="3 4 5">May play a central role in the initial events of axis formation and in particular in specifying anterior head regions and their spatial relationship with trunk structures. Activates the head organizer gene cer1 by acting synergistically with siamois and mix-A/mix.1 through the 5'-TAATCT-3' element of the cer1 promoter. Also binds as a complex with lhx1/lim1 and ldb1 to the gsc promoter to stimulate expression.</text>
</comment>
<comment type="interaction">
    <interactant intactId="EBI-15695802">
        <id>Q91813</id>
    </interactant>
    <interactant intactId="EBI-15695825">
        <id>O42569</id>
        <label>sox2</label>
    </interactant>
    <organismsDiffer>false</organismsDiffer>
    <experiments>5</experiments>
</comment>
<comment type="subcellular location">
    <subcellularLocation>
        <location evidence="6">Nucleus</location>
    </subcellularLocation>
</comment>
<comment type="tissue specificity">
    <text evidence="5">Shows a localized expression in the dorsal region of the marginal zone at stage 9.5. At stage 10.5, expressed in dorsal bottle cells of the dorsal deep zone fated to give rise to prechordal mesendoderm. Also begins to be expressed in presumptive anterior neuroectoderm where expression persists in subsequent stages. At stage 14, expression is confined to mesendoderm and ectoderm cells of anterior dorsal regions.</text>
</comment>
<comment type="developmental stage">
    <text evidence="5">Expressed at low levels throughout early development from unfertilized egg to late blastula when its expression level significantly increases.</text>
</comment>
<comment type="similarity">
    <text evidence="6">Belongs to the paired homeobox family. Bicoid subfamily.</text>
</comment>
<name>OTX2A_XENLA</name>
<evidence type="ECO:0000255" key="1">
    <source>
        <dbReference type="PROSITE-ProRule" id="PRU00108"/>
    </source>
</evidence>
<evidence type="ECO:0000256" key="2">
    <source>
        <dbReference type="SAM" id="MobiDB-lite"/>
    </source>
</evidence>
<evidence type="ECO:0000269" key="3">
    <source>
    </source>
</evidence>
<evidence type="ECO:0000269" key="4">
    <source>
    </source>
</evidence>
<evidence type="ECO:0000269" key="5">
    <source>
    </source>
</evidence>
<evidence type="ECO:0000305" key="6"/>
<protein>
    <recommendedName>
        <fullName>Homeobox protein OTX2-A</fullName>
        <shortName>xOTX2-A</shortName>
    </recommendedName>
    <alternativeName>
        <fullName>Orthodenticle 2-A</fullName>
    </alternativeName>
    <alternativeName>
        <fullName>Orthodenticle-A-like protein A</fullName>
    </alternativeName>
</protein>
<reference key="1">
    <citation type="journal article" date="1995" name="Development">
        <title>The Xenopus homologue of Otx2 is a maternal homeobox gene that demarcates and specifies anterior body regions.</title>
        <authorList>
            <person name="Pannese M."/>
            <person name="Polo C."/>
            <person name="Andreazzoli M."/>
            <person name="Vignali R."/>
            <person name="Kablar B."/>
            <person name="Barsacchi G."/>
            <person name="Boncinelli E."/>
        </authorList>
    </citation>
    <scope>NUCLEOTIDE SEQUENCE [MRNA]</scope>
    <scope>FUNCTION</scope>
    <scope>TISSUE SPECIFICITY</scope>
    <scope>DEVELOPMENTAL STAGE</scope>
    <scope>MUTAGENESIS OF LYS-87</scope>
    <source>
        <tissue>Embryo</tissue>
    </source>
</reference>
<reference key="2">
    <citation type="submission" date="2004-07" db="EMBL/GenBank/DDBJ databases">
        <authorList>
            <consortium name="NIH - Xenopus Gene Collection (XGC) project"/>
        </authorList>
    </citation>
    <scope>NUCLEOTIDE SEQUENCE [LARGE SCALE MRNA]</scope>
    <source>
        <tissue>Embryo</tissue>
    </source>
</reference>
<reference key="3">
    <citation type="journal article" date="1993" name="Science">
        <title>Neural induction by the secreted polypeptide noggin.</title>
        <authorList>
            <person name="Lamb T.M."/>
            <person name="Knecht A.K."/>
            <person name="Smith W.C."/>
            <person name="Stachel S.E."/>
            <person name="Economides A.N."/>
            <person name="Stahl N."/>
            <person name="Yancopolous G.D."/>
            <person name="Harland R.M."/>
        </authorList>
    </citation>
    <scope>NUCLEOTIDE SEQUENCE [MRNA] OF 1-102</scope>
    <source>
        <tissue>Head</tissue>
    </source>
</reference>
<reference key="4">
    <citation type="journal article" date="2000" name="Dev. Biol.">
        <title>Xlim-1 and LIM domain binding protein 1 cooperate with various transcription factors in the regulation of the goosecoid promoter.</title>
        <authorList>
            <person name="Mochizuki T."/>
            <person name="Karavanov A.A."/>
            <person name="Curtiss P.E."/>
            <person name="Ault K.T."/>
            <person name="Sugimoto N."/>
            <person name="Watabe T."/>
            <person name="Shiokawa K."/>
            <person name="Jamrich M."/>
            <person name="Cho K.W.Y."/>
            <person name="Dawid I.B."/>
            <person name="Taira M."/>
        </authorList>
    </citation>
    <scope>FUNCTION</scope>
</reference>
<reference key="5">
    <citation type="journal article" date="2003" name="Dev. Biol.">
        <title>Molecular link in the sequential induction of the Spemann organizer: direct activation of the cerberus gene by Xlim-1, Xotx2, Mix.1, and Siamois, immediately downstream from Nodal and Wnt signaling.</title>
        <authorList>
            <person name="Yamamoto S."/>
            <person name="Hikasa H."/>
            <person name="Ono H."/>
            <person name="Taira M."/>
        </authorList>
    </citation>
    <scope>FUNCTION</scope>
</reference>
<sequence>MMSYLKQPPYAVNGLSLTASGMDLLHQSVGYPATPRKQRRERTTFTRAQLDILEALFAKTRYPDIFMREEVALKINLPESRVQVWFKNRRAKCRQQQQQQQNGGQNKVRPSKKKTSPVREVSSESGTSGQFSPPSSTSVPVISSSTAPVSIWSPASVSPLSDPLSTSSSCMQRSYPMTYTQASGYSQGYAGSTSYFGGMDCGSYLSPMHHQLSGPGATLSPMGTNAVTSHLNQSPVALSSQAYGASSLGFNSTDCLDYKDQTASWKLNFNADCLDYKDQTSSWKFQVL</sequence>
<organism>
    <name type="scientific">Xenopus laevis</name>
    <name type="common">African clawed frog</name>
    <dbReference type="NCBI Taxonomy" id="8355"/>
    <lineage>
        <taxon>Eukaryota</taxon>
        <taxon>Metazoa</taxon>
        <taxon>Chordata</taxon>
        <taxon>Craniata</taxon>
        <taxon>Vertebrata</taxon>
        <taxon>Euteleostomi</taxon>
        <taxon>Amphibia</taxon>
        <taxon>Batrachia</taxon>
        <taxon>Anura</taxon>
        <taxon>Pipoidea</taxon>
        <taxon>Pipidae</taxon>
        <taxon>Xenopodinae</taxon>
        <taxon>Xenopus</taxon>
        <taxon>Xenopus</taxon>
    </lineage>
</organism>
<feature type="chain" id="PRO_0000049217" description="Homeobox protein OTX2-A">
    <location>
        <begin position="1"/>
        <end position="288"/>
    </location>
</feature>
<feature type="DNA-binding region" description="Homeobox" evidence="1">
    <location>
        <begin position="38"/>
        <end position="97"/>
    </location>
</feature>
<feature type="region of interest" description="Disordered" evidence="2">
    <location>
        <begin position="93"/>
        <end position="140"/>
    </location>
</feature>
<feature type="compositionally biased region" description="Low complexity" evidence="2">
    <location>
        <begin position="95"/>
        <end position="106"/>
    </location>
</feature>
<feature type="site" description="Determines DNA-binding specificity">
    <location>
        <position position="87"/>
    </location>
</feature>
<feature type="mutagenesis site" description="Fails to produce a phenotype when injected." evidence="5">
    <original>K</original>
    <variation>E</variation>
    <location>
        <position position="87"/>
    </location>
</feature>
<feature type="mutagenesis site" description="Produces a proportion of abnormal phenotypes when injected, but these are substantially different from those for intact otx2-A injections." evidence="5">
    <original>K</original>
    <variation>Q</variation>
    <location>
        <position position="87"/>
    </location>
</feature>
<feature type="sequence conflict" description="In Ref. 3; AAA85388." evidence="6" ref="3">
    <original>N</original>
    <variation>Q</variation>
    <location>
        <position position="102"/>
    </location>
</feature>
<gene>
    <name type="primary">otx2-a</name>
</gene>
<accession>Q91813</accession>
<accession>Q6DDZ3</accession>
<accession>Q91811</accession>
<accession>Q91812</accession>
<dbReference type="EMBL" id="Z46972">
    <property type="protein sequence ID" value="CAA87093.1"/>
    <property type="molecule type" value="mRNA"/>
</dbReference>
<dbReference type="EMBL" id="BC077357">
    <property type="protein sequence ID" value="AAH77357.1"/>
    <property type="molecule type" value="mRNA"/>
</dbReference>
<dbReference type="EMBL" id="L26509">
    <property type="protein sequence ID" value="AAA85388.1"/>
    <property type="molecule type" value="mRNA"/>
</dbReference>
<dbReference type="PIR" id="I51620">
    <property type="entry name" value="I51620"/>
</dbReference>
<dbReference type="RefSeq" id="NP_001084160.1">
    <property type="nucleotide sequence ID" value="NM_001090691.1"/>
</dbReference>
<dbReference type="RefSeq" id="XP_018087427.1">
    <property type="nucleotide sequence ID" value="XM_018231938.1"/>
</dbReference>
<dbReference type="SMR" id="Q91813"/>
<dbReference type="IntAct" id="Q91813">
    <property type="interactions" value="1"/>
</dbReference>
<dbReference type="DNASU" id="399342"/>
<dbReference type="GeneID" id="399342"/>
<dbReference type="KEGG" id="xla:399342"/>
<dbReference type="AGR" id="Xenbase:XB-GENE-6254039"/>
<dbReference type="CTD" id="399342"/>
<dbReference type="Xenbase" id="XB-GENE-6254039">
    <property type="gene designation" value="otx2.S"/>
</dbReference>
<dbReference type="OMA" id="NLMHHEL"/>
<dbReference type="OrthoDB" id="6159439at2759"/>
<dbReference type="Proteomes" id="UP000186698">
    <property type="component" value="Chromosome 8S"/>
</dbReference>
<dbReference type="Bgee" id="399342">
    <property type="expression patterns" value="Expressed in gastrula and 9 other cell types or tissues"/>
</dbReference>
<dbReference type="GO" id="GO:0005634">
    <property type="term" value="C:nucleus"/>
    <property type="evidence" value="ECO:0000318"/>
    <property type="project" value="GO_Central"/>
</dbReference>
<dbReference type="GO" id="GO:0000981">
    <property type="term" value="F:DNA-binding transcription factor activity, RNA polymerase II-specific"/>
    <property type="evidence" value="ECO:0000318"/>
    <property type="project" value="GO_Central"/>
</dbReference>
<dbReference type="GO" id="GO:0000978">
    <property type="term" value="F:RNA polymerase II cis-regulatory region sequence-specific DNA binding"/>
    <property type="evidence" value="ECO:0000318"/>
    <property type="project" value="GO_Central"/>
</dbReference>
<dbReference type="GO" id="GO:0043565">
    <property type="term" value="F:sequence-specific DNA binding"/>
    <property type="evidence" value="ECO:0000314"/>
    <property type="project" value="UniProtKB"/>
</dbReference>
<dbReference type="GO" id="GO:0060028">
    <property type="term" value="P:convergent extension involved in axis elongation"/>
    <property type="evidence" value="ECO:0000315"/>
    <property type="project" value="Xenbase"/>
</dbReference>
<dbReference type="GO" id="GO:0001702">
    <property type="term" value="P:gastrulation with mouth forming second"/>
    <property type="evidence" value="ECO:0000315"/>
    <property type="project" value="Xenbase"/>
</dbReference>
<dbReference type="GO" id="GO:0001843">
    <property type="term" value="P:neural tube closure"/>
    <property type="evidence" value="ECO:0000315"/>
    <property type="project" value="Xenbase"/>
</dbReference>
<dbReference type="GO" id="GO:0048570">
    <property type="term" value="P:notochord morphogenesis"/>
    <property type="evidence" value="ECO:0000315"/>
    <property type="project" value="Xenbase"/>
</dbReference>
<dbReference type="GO" id="GO:0045893">
    <property type="term" value="P:positive regulation of DNA-templated transcription"/>
    <property type="evidence" value="ECO:0000314"/>
    <property type="project" value="UniProtKB"/>
</dbReference>
<dbReference type="GO" id="GO:0006357">
    <property type="term" value="P:regulation of transcription by RNA polymerase II"/>
    <property type="evidence" value="ECO:0000318"/>
    <property type="project" value="GO_Central"/>
</dbReference>
<dbReference type="CDD" id="cd00086">
    <property type="entry name" value="homeodomain"/>
    <property type="match status" value="1"/>
</dbReference>
<dbReference type="FunFam" id="1.10.10.60:FF:000142">
    <property type="entry name" value="homeobox protein OTX2 isoform X2"/>
    <property type="match status" value="1"/>
</dbReference>
<dbReference type="Gene3D" id="1.10.10.60">
    <property type="entry name" value="Homeodomain-like"/>
    <property type="match status" value="1"/>
</dbReference>
<dbReference type="InterPro" id="IPR001356">
    <property type="entry name" value="HD"/>
</dbReference>
<dbReference type="InterPro" id="IPR017970">
    <property type="entry name" value="Homeobox_CS"/>
</dbReference>
<dbReference type="InterPro" id="IPR009057">
    <property type="entry name" value="Homeodomain-like_sf"/>
</dbReference>
<dbReference type="InterPro" id="IPR003022">
    <property type="entry name" value="Otx2_TF"/>
</dbReference>
<dbReference type="InterPro" id="IPR003025">
    <property type="entry name" value="Otx_TF"/>
</dbReference>
<dbReference type="InterPro" id="IPR013851">
    <property type="entry name" value="Otx_TF_C"/>
</dbReference>
<dbReference type="PANTHER" id="PTHR45793">
    <property type="entry name" value="HOMEOBOX PROTEIN"/>
    <property type="match status" value="1"/>
</dbReference>
<dbReference type="PANTHER" id="PTHR45793:SF2">
    <property type="entry name" value="HOMEOBOX PROTEIN OTX2"/>
    <property type="match status" value="1"/>
</dbReference>
<dbReference type="Pfam" id="PF00046">
    <property type="entry name" value="Homeodomain"/>
    <property type="match status" value="1"/>
</dbReference>
<dbReference type="Pfam" id="PF03529">
    <property type="entry name" value="TF_Otx"/>
    <property type="match status" value="1"/>
</dbReference>
<dbReference type="PRINTS" id="PR01257">
    <property type="entry name" value="OTX2HOMEOBOX"/>
</dbReference>
<dbReference type="PRINTS" id="PR01255">
    <property type="entry name" value="OTXHOMEOBOX"/>
</dbReference>
<dbReference type="SMART" id="SM00389">
    <property type="entry name" value="HOX"/>
    <property type="match status" value="1"/>
</dbReference>
<dbReference type="SUPFAM" id="SSF46689">
    <property type="entry name" value="Homeodomain-like"/>
    <property type="match status" value="1"/>
</dbReference>
<dbReference type="PROSITE" id="PS00027">
    <property type="entry name" value="HOMEOBOX_1"/>
    <property type="match status" value="1"/>
</dbReference>
<dbReference type="PROSITE" id="PS50071">
    <property type="entry name" value="HOMEOBOX_2"/>
    <property type="match status" value="1"/>
</dbReference>
<proteinExistence type="evidence at protein level"/>
<keyword id="KW-0217">Developmental protein</keyword>
<keyword id="KW-0238">DNA-binding</keyword>
<keyword id="KW-0371">Homeobox</keyword>
<keyword id="KW-0539">Nucleus</keyword>
<keyword id="KW-1185">Reference proteome</keyword>